<feature type="initiator methionine" description="Removed" evidence="4">
    <location>
        <position position="1"/>
    </location>
</feature>
<feature type="chain" id="PRO_0000136761" description="Large ribosomal subunit protein eL8B">
    <location>
        <begin position="2"/>
        <end position="256"/>
    </location>
</feature>
<feature type="region of interest" description="Disordered" evidence="1">
    <location>
        <begin position="1"/>
        <end position="37"/>
    </location>
</feature>
<feature type="sequence conflict" description="In Ref. 2; AAA20990." evidence="8" ref="2">
    <original>AA</original>
    <variation>G</variation>
    <location>
        <begin position="114"/>
        <end position="115"/>
    </location>
</feature>
<organism>
    <name type="scientific">Saccharomyces cerevisiae (strain ATCC 204508 / S288c)</name>
    <name type="common">Baker's yeast</name>
    <dbReference type="NCBI Taxonomy" id="559292"/>
    <lineage>
        <taxon>Eukaryota</taxon>
        <taxon>Fungi</taxon>
        <taxon>Dikarya</taxon>
        <taxon>Ascomycota</taxon>
        <taxon>Saccharomycotina</taxon>
        <taxon>Saccharomycetes</taxon>
        <taxon>Saccharomycetales</taxon>
        <taxon>Saccharomycetaceae</taxon>
        <taxon>Saccharomyces</taxon>
    </lineage>
</organism>
<sequence length="256" mass="28112">MAPGKKVAPAPFGAKSTKSNKAKNPLTHSTPKNFGIGQAVQPKRNLSRYVKWPEYVRLQRQKKILSIRLKVPPTIAQFQYTLDRNTAAETFKLFNKYRPETAAEKKERLTKEAAAIAEGKSKQDASPKPYAVKYGLNHVVSLIENKKAKLVLIANDVDPIELVVFLPALCKKMGVPYAIIKGKARLGTLVNQKTSAVAALTEVRAEDEAALAKLVSTIDANFADKYDEVKKHWGGGILGNKAQAKMDKRAKTSDSA</sequence>
<gene>
    <name evidence="7" type="primary">RPL8B</name>
    <name type="synonym">KRB1</name>
    <name type="synonym">RPL4B</name>
    <name type="ordered locus">YLL045C</name>
</gene>
<name>RL8B_YEAST</name>
<keyword id="KW-0963">Cytoplasm</keyword>
<keyword id="KW-0903">Direct protein sequencing</keyword>
<keyword id="KW-1185">Reference proteome</keyword>
<keyword id="KW-0687">Ribonucleoprotein</keyword>
<keyword id="KW-0689">Ribosomal protein</keyword>
<proteinExistence type="evidence at protein level"/>
<dbReference type="EMBL" id="X56835">
    <property type="protein sequence ID" value="CAA40165.1"/>
    <property type="molecule type" value="Genomic_DNA"/>
</dbReference>
<dbReference type="EMBL" id="M88608">
    <property type="protein sequence ID" value="AAA20990.1"/>
    <property type="molecule type" value="Genomic_DNA"/>
</dbReference>
<dbReference type="EMBL" id="Z73150">
    <property type="protein sequence ID" value="CAA97495.1"/>
    <property type="molecule type" value="Genomic_DNA"/>
</dbReference>
<dbReference type="EMBL" id="BK006945">
    <property type="protein sequence ID" value="DAA09278.1"/>
    <property type="molecule type" value="Genomic_DNA"/>
</dbReference>
<dbReference type="PIR" id="S16810">
    <property type="entry name" value="S16810"/>
</dbReference>
<dbReference type="RefSeq" id="NP_013055.1">
    <property type="nucleotide sequence ID" value="NM_001181865.1"/>
</dbReference>
<dbReference type="SMR" id="P29453"/>
<dbReference type="BioGRID" id="31269">
    <property type="interactions" value="485"/>
</dbReference>
<dbReference type="ComplexPortal" id="CPX-1601">
    <property type="entry name" value="60S cytosolic large ribosomal subunit"/>
</dbReference>
<dbReference type="FunCoup" id="P29453">
    <property type="interactions" value="1435"/>
</dbReference>
<dbReference type="IntAct" id="P29453">
    <property type="interactions" value="202"/>
</dbReference>
<dbReference type="MINT" id="P29453"/>
<dbReference type="STRING" id="4932.YLL045C"/>
<dbReference type="CarbonylDB" id="P29453"/>
<dbReference type="iPTMnet" id="P29453"/>
<dbReference type="PaxDb" id="4932-YLL045C"/>
<dbReference type="PeptideAtlas" id="P29453"/>
<dbReference type="EnsemblFungi" id="YLL045C_mRNA">
    <property type="protein sequence ID" value="YLL045C"/>
    <property type="gene ID" value="YLL045C"/>
</dbReference>
<dbReference type="GeneID" id="850682"/>
<dbReference type="KEGG" id="sce:YLL045C"/>
<dbReference type="AGR" id="SGD:S000003968"/>
<dbReference type="SGD" id="S000003968">
    <property type="gene designation" value="RPL8B"/>
</dbReference>
<dbReference type="VEuPathDB" id="FungiDB:YLL045C"/>
<dbReference type="eggNOG" id="KOG3166">
    <property type="taxonomic scope" value="Eukaryota"/>
</dbReference>
<dbReference type="GeneTree" id="ENSGT00940000170054"/>
<dbReference type="HOGENOM" id="CLU_055193_0_0_1"/>
<dbReference type="InParanoid" id="P29453"/>
<dbReference type="OMA" id="RMVKWPA"/>
<dbReference type="OrthoDB" id="29563at2759"/>
<dbReference type="BioCyc" id="YEAST:G3O-32145-MONOMER"/>
<dbReference type="Reactome" id="R-SCE-156827">
    <property type="pathway name" value="L13a-mediated translational silencing of Ceruloplasmin expression"/>
</dbReference>
<dbReference type="Reactome" id="R-SCE-1799339">
    <property type="pathway name" value="SRP-dependent cotranslational protein targeting to membrane"/>
</dbReference>
<dbReference type="Reactome" id="R-SCE-72689">
    <property type="pathway name" value="Formation of a pool of free 40S subunits"/>
</dbReference>
<dbReference type="Reactome" id="R-SCE-72706">
    <property type="pathway name" value="GTP hydrolysis and joining of the 60S ribosomal subunit"/>
</dbReference>
<dbReference type="Reactome" id="R-SCE-975956">
    <property type="pathway name" value="Nonsense Mediated Decay (NMD) independent of the Exon Junction Complex (EJC)"/>
</dbReference>
<dbReference type="Reactome" id="R-SCE-975957">
    <property type="pathway name" value="Nonsense Mediated Decay (NMD) enhanced by the Exon Junction Complex (EJC)"/>
</dbReference>
<dbReference type="BioGRID-ORCS" id="850682">
    <property type="hits" value="3 hits in 10 CRISPR screens"/>
</dbReference>
<dbReference type="ChiTaRS" id="RPL8B">
    <property type="organism name" value="yeast"/>
</dbReference>
<dbReference type="PRO" id="PR:P29453"/>
<dbReference type="Proteomes" id="UP000002311">
    <property type="component" value="Chromosome XII"/>
</dbReference>
<dbReference type="RNAct" id="P29453">
    <property type="molecule type" value="protein"/>
</dbReference>
<dbReference type="GO" id="GO:0005829">
    <property type="term" value="C:cytosol"/>
    <property type="evidence" value="ECO:0000304"/>
    <property type="project" value="Reactome"/>
</dbReference>
<dbReference type="GO" id="GO:0022625">
    <property type="term" value="C:cytosolic large ribosomal subunit"/>
    <property type="evidence" value="ECO:0000314"/>
    <property type="project" value="SGD"/>
</dbReference>
<dbReference type="GO" id="GO:0003723">
    <property type="term" value="F:RNA binding"/>
    <property type="evidence" value="ECO:0000318"/>
    <property type="project" value="GO_Central"/>
</dbReference>
<dbReference type="GO" id="GO:0003735">
    <property type="term" value="F:structural constituent of ribosome"/>
    <property type="evidence" value="ECO:0000305"/>
    <property type="project" value="SGD"/>
</dbReference>
<dbReference type="GO" id="GO:0002181">
    <property type="term" value="P:cytoplasmic translation"/>
    <property type="evidence" value="ECO:0000305"/>
    <property type="project" value="SGD"/>
</dbReference>
<dbReference type="GO" id="GO:0000470">
    <property type="term" value="P:maturation of LSU-rRNA"/>
    <property type="evidence" value="ECO:0000315"/>
    <property type="project" value="SGD"/>
</dbReference>
<dbReference type="FunFam" id="3.30.1330.30:FF:000003">
    <property type="entry name" value="60S ribosomal protein L7a"/>
    <property type="match status" value="1"/>
</dbReference>
<dbReference type="Gene3D" id="3.30.1330.30">
    <property type="match status" value="1"/>
</dbReference>
<dbReference type="InterPro" id="IPR050257">
    <property type="entry name" value="eL8/uL1-like"/>
</dbReference>
<dbReference type="InterPro" id="IPR029064">
    <property type="entry name" value="Ribosomal_eL30-like_sf"/>
</dbReference>
<dbReference type="InterPro" id="IPR004037">
    <property type="entry name" value="Ribosomal_eL8-like_CS"/>
</dbReference>
<dbReference type="InterPro" id="IPR004038">
    <property type="entry name" value="Ribosomal_eL8/eL30/eS12/Gad45"/>
</dbReference>
<dbReference type="InterPro" id="IPR018492">
    <property type="entry name" value="Ribosomal_eL8/Nhp2"/>
</dbReference>
<dbReference type="InterPro" id="IPR001921">
    <property type="entry name" value="Ribosomal_eL8_euk"/>
</dbReference>
<dbReference type="PANTHER" id="PTHR23105">
    <property type="entry name" value="RIBOSOMAL PROTEIN L7AE FAMILY MEMBER"/>
    <property type="match status" value="1"/>
</dbReference>
<dbReference type="Pfam" id="PF01248">
    <property type="entry name" value="Ribosomal_L7Ae"/>
    <property type="match status" value="1"/>
</dbReference>
<dbReference type="PRINTS" id="PR00881">
    <property type="entry name" value="L7ARS6FAMILY"/>
</dbReference>
<dbReference type="PRINTS" id="PR00882">
    <property type="entry name" value="RIBOSOMALL7A"/>
</dbReference>
<dbReference type="SUPFAM" id="SSF55315">
    <property type="entry name" value="L30e-like"/>
    <property type="match status" value="1"/>
</dbReference>
<dbReference type="PROSITE" id="PS01082">
    <property type="entry name" value="RIBOSOMAL_L7AE"/>
    <property type="match status" value="1"/>
</dbReference>
<evidence type="ECO:0000256" key="1">
    <source>
        <dbReference type="SAM" id="MobiDB-lite"/>
    </source>
</evidence>
<evidence type="ECO:0000269" key="2">
    <source>
    </source>
</evidence>
<evidence type="ECO:0000269" key="3">
    <source>
    </source>
</evidence>
<evidence type="ECO:0000269" key="4">
    <source>
    </source>
</evidence>
<evidence type="ECO:0000269" key="5">
    <source>
    </source>
</evidence>
<evidence type="ECO:0000303" key="6">
    <source>
    </source>
</evidence>
<evidence type="ECO:0000303" key="7">
    <source>
    </source>
</evidence>
<evidence type="ECO:0000305" key="8"/>
<evidence type="ECO:0000305" key="9">
    <source>
    </source>
</evidence>
<evidence type="ECO:0000305" key="10">
    <source>
    </source>
</evidence>
<comment type="function">
    <text evidence="9">Component of the ribosome, a large ribonucleoprotein complex responsible for the synthesis of proteins in the cell. The small ribosomal subunit (SSU) binds messenger RNAs (mRNAs) and translates the encoded message by selecting cognate aminoacyl-transfer RNA (tRNA) molecules. The large subunit (LSU) contains the ribosomal catalytic site termed the peptidyl transferase center (PTC), which catalyzes the formation of peptide bonds, thereby polymerizing the amino acids delivered by tRNAs into a polypeptide chain. The nascent polypeptides leave the ribosome through a tunnel in the LSU and interact with protein factors that function in enzymatic processing, targeting, and the membrane insertion of nascent chains at the exit of the ribosomal tunnel.</text>
</comment>
<comment type="subunit">
    <text evidence="5 10">Component of the large ribosomal subunit (LSU). Mature yeast ribosomes consist of a small (40S) and a large (60S) subunit. The 40S small subunit contains 1 molecule of ribosomal RNA (18S rRNA) and 33 different proteins (encoded by 57 genes). The large 60S subunit contains 3 rRNA molecules (25S, 5.8S and 5S rRNA) and 46 different proteins (encoded by 81 genes) (PubMed:22096102, PubMed:9559554).</text>
</comment>
<comment type="subcellular location">
    <subcellularLocation>
        <location evidence="2 5">Cytoplasm</location>
    </subcellularLocation>
</comment>
<comment type="miscellaneous">
    <text evidence="3">Present with 80200 molecules/cell in log phase SD medium.</text>
</comment>
<comment type="miscellaneous">
    <text evidence="8">There are 2 genes for eL8 in yeast.</text>
</comment>
<comment type="similarity">
    <text evidence="8">Belongs to the eukaryotic ribosomal protein eL8 family.</text>
</comment>
<accession>P29453</accession>
<accession>D6VXW2</accession>
<protein>
    <recommendedName>
        <fullName evidence="6">Large ribosomal subunit protein eL8B</fullName>
    </recommendedName>
    <alternativeName>
        <fullName evidence="7">60S ribosomal protein L8-B</fullName>
    </alternativeName>
    <alternativeName>
        <fullName>L4</fullName>
    </alternativeName>
    <alternativeName>
        <fullName>L4-1</fullName>
    </alternativeName>
    <alternativeName>
        <fullName>RP6</fullName>
    </alternativeName>
    <alternativeName>
        <fullName>YL5</fullName>
    </alternativeName>
</protein>
<reference key="1">
    <citation type="journal article" date="1991" name="Mol. Gen. Genet.">
        <title>The organization and expression of the Saccharomyces cerevisiae L4 ribosomal protein genes and their identification as the homologues of the mammalian ribosomal protein gene L7a.</title>
        <authorList>
            <person name="Yon J."/>
            <person name="Giallongo A."/>
            <person name="Fried M."/>
        </authorList>
    </citation>
    <scope>NUCLEOTIDE SEQUENCE [GENOMIC DNA]</scope>
    <source>
        <strain>ATCC 204508 / S288c</strain>
    </source>
</reference>
<reference key="2">
    <citation type="journal article" date="1994" name="Nucleic Acids Res.">
        <title>RNP1, a new ribonucleoprotein gene of the yeast Saccharomyces cerevisiae.</title>
        <authorList>
            <person name="Cusick M.E."/>
        </authorList>
    </citation>
    <scope>NUCLEOTIDE SEQUENCE [GENOMIC DNA]</scope>
</reference>
<reference key="3">
    <citation type="journal article" date="1994" name="Biochim. Biophys. Acta">
        <title>Purification and identification of two major single-stranded binding proteins of yeast Saccharomyces cerevisiae as ribosomal protein L4 and histone H2B.</title>
        <authorList>
            <person name="Cusick M.E."/>
        </authorList>
    </citation>
    <scope>NUCLEOTIDE SEQUENCE [GENOMIC DNA]</scope>
    <scope>PARTIAL PROTEIN SEQUENCE</scope>
</reference>
<reference key="4">
    <citation type="journal article" date="1997" name="Nature">
        <title>The nucleotide sequence of Saccharomyces cerevisiae chromosome XII.</title>
        <authorList>
            <person name="Johnston M."/>
            <person name="Hillier L.W."/>
            <person name="Riles L."/>
            <person name="Albermann K."/>
            <person name="Andre B."/>
            <person name="Ansorge W."/>
            <person name="Benes V."/>
            <person name="Brueckner M."/>
            <person name="Delius H."/>
            <person name="Dubois E."/>
            <person name="Duesterhoeft A."/>
            <person name="Entian K.-D."/>
            <person name="Floeth M."/>
            <person name="Goffeau A."/>
            <person name="Hebling U."/>
            <person name="Heumann K."/>
            <person name="Heuss-Neitzel D."/>
            <person name="Hilbert H."/>
            <person name="Hilger F."/>
            <person name="Kleine K."/>
            <person name="Koetter P."/>
            <person name="Louis E.J."/>
            <person name="Messenguy F."/>
            <person name="Mewes H.-W."/>
            <person name="Miosga T."/>
            <person name="Moestl D."/>
            <person name="Mueller-Auer S."/>
            <person name="Nentwich U."/>
            <person name="Obermaier B."/>
            <person name="Piravandi E."/>
            <person name="Pohl T.M."/>
            <person name="Portetelle D."/>
            <person name="Purnelle B."/>
            <person name="Rechmann S."/>
            <person name="Rieger M."/>
            <person name="Rinke M."/>
            <person name="Rose M."/>
            <person name="Scharfe M."/>
            <person name="Scherens B."/>
            <person name="Scholler P."/>
            <person name="Schwager C."/>
            <person name="Schwarz S."/>
            <person name="Underwood A.P."/>
            <person name="Urrestarazu L.A."/>
            <person name="Vandenbol M."/>
            <person name="Verhasselt P."/>
            <person name="Vierendeels F."/>
            <person name="Voet M."/>
            <person name="Volckaert G."/>
            <person name="Voss H."/>
            <person name="Wambutt R."/>
            <person name="Wedler E."/>
            <person name="Wedler H."/>
            <person name="Zimmermann F.K."/>
            <person name="Zollner A."/>
            <person name="Hani J."/>
            <person name="Hoheisel J.D."/>
        </authorList>
    </citation>
    <scope>NUCLEOTIDE SEQUENCE [LARGE SCALE GENOMIC DNA]</scope>
    <source>
        <strain>ATCC 204508 / S288c</strain>
    </source>
</reference>
<reference key="5">
    <citation type="journal article" date="2014" name="G3 (Bethesda)">
        <title>The reference genome sequence of Saccharomyces cerevisiae: Then and now.</title>
        <authorList>
            <person name="Engel S.R."/>
            <person name="Dietrich F.S."/>
            <person name="Fisk D.G."/>
            <person name="Binkley G."/>
            <person name="Balakrishnan R."/>
            <person name="Costanzo M.C."/>
            <person name="Dwight S.S."/>
            <person name="Hitz B.C."/>
            <person name="Karra K."/>
            <person name="Nash R.S."/>
            <person name="Weng S."/>
            <person name="Wong E.D."/>
            <person name="Lloyd P."/>
            <person name="Skrzypek M.S."/>
            <person name="Miyasato S.R."/>
            <person name="Simison M."/>
            <person name="Cherry J.M."/>
        </authorList>
    </citation>
    <scope>GENOME REANNOTATION</scope>
    <source>
        <strain>ATCC 204508 / S288c</strain>
    </source>
</reference>
<reference key="6">
    <citation type="journal article" date="1992" name="J. Biol. Chem.">
        <title>NH2-terminal acetylation of ribosomal proteins of Saccharomyces cerevisiae.</title>
        <authorList>
            <person name="Takakura H."/>
            <person name="Tsunasawa S."/>
            <person name="Miyagi M."/>
            <person name="Warner J.R."/>
        </authorList>
    </citation>
    <scope>PROTEIN SEQUENCE OF 2-20</scope>
</reference>
<reference key="7">
    <citation type="journal article" date="1998" name="Yeast">
        <title>The list of cytoplasmic ribosomal proteins of Saccharomyces cerevisiae.</title>
        <authorList>
            <person name="Planta R.J."/>
            <person name="Mager W.H."/>
        </authorList>
    </citation>
    <scope>NOMENCLATURE</scope>
    <scope>SUBUNIT</scope>
</reference>
<reference key="8">
    <citation type="journal article" date="2003" name="Nature">
        <title>Global analysis of protein localization in budding yeast.</title>
        <authorList>
            <person name="Huh W.-K."/>
            <person name="Falvo J.V."/>
            <person name="Gerke L.C."/>
            <person name="Carroll A.S."/>
            <person name="Howson R.W."/>
            <person name="Weissman J.S."/>
            <person name="O'Shea E.K."/>
        </authorList>
    </citation>
    <scope>SUBCELLULAR LOCATION [LARGE SCALE ANALYSIS]</scope>
</reference>
<reference key="9">
    <citation type="journal article" date="2003" name="Nature">
        <title>Global analysis of protein expression in yeast.</title>
        <authorList>
            <person name="Ghaemmaghami S."/>
            <person name="Huh W.-K."/>
            <person name="Bower K."/>
            <person name="Howson R.W."/>
            <person name="Belle A."/>
            <person name="Dephoure N."/>
            <person name="O'Shea E.K."/>
            <person name="Weissman J.S."/>
        </authorList>
    </citation>
    <scope>LEVEL OF PROTEIN EXPRESSION [LARGE SCALE ANALYSIS]</scope>
</reference>
<reference key="10">
    <citation type="journal article" date="2011" name="Science">
        <title>The structure of the eukaryotic ribosome at 3.0 A resolution.</title>
        <authorList>
            <person name="Ben-Shem A."/>
            <person name="Garreau de Loubresse N."/>
            <person name="Melnikov S."/>
            <person name="Jenner L."/>
            <person name="Yusupova G."/>
            <person name="Yusupov M."/>
        </authorList>
    </citation>
    <scope>SUBUNIT</scope>
    <scope>SUBCELLULAR LOCATION</scope>
</reference>
<reference key="11">
    <citation type="journal article" date="2014" name="Curr. Opin. Struct. Biol.">
        <title>A new system for naming ribosomal proteins.</title>
        <authorList>
            <person name="Ban N."/>
            <person name="Beckmann R."/>
            <person name="Cate J.H.D."/>
            <person name="Dinman J.D."/>
            <person name="Dragon F."/>
            <person name="Ellis S.R."/>
            <person name="Lafontaine D.L.J."/>
            <person name="Lindahl L."/>
            <person name="Liljas A."/>
            <person name="Lipton J.M."/>
            <person name="McAlear M.A."/>
            <person name="Moore P.B."/>
            <person name="Noller H.F."/>
            <person name="Ortega J."/>
            <person name="Panse V.G."/>
            <person name="Ramakrishnan V."/>
            <person name="Spahn C.M.T."/>
            <person name="Steitz T.A."/>
            <person name="Tchorzewski M."/>
            <person name="Tollervey D."/>
            <person name="Warren A.J."/>
            <person name="Williamson J.R."/>
            <person name="Wilson D."/>
            <person name="Yonath A."/>
            <person name="Yusupov M."/>
        </authorList>
    </citation>
    <scope>NOMENCLATURE</scope>
</reference>